<keyword id="KW-0067">ATP-binding</keyword>
<keyword id="KW-0963">Cytoplasm</keyword>
<keyword id="KW-0418">Kinase</keyword>
<keyword id="KW-0479">Metal-binding</keyword>
<keyword id="KW-0545">Nucleotide biosynthesis</keyword>
<keyword id="KW-0547">Nucleotide-binding</keyword>
<keyword id="KW-1185">Reference proteome</keyword>
<keyword id="KW-0808">Transferase</keyword>
<keyword id="KW-0862">Zinc</keyword>
<name>KAD_LACDA</name>
<feature type="chain" id="PRO_1000021732" description="Adenylate kinase">
    <location>
        <begin position="1"/>
        <end position="217"/>
    </location>
</feature>
<feature type="region of interest" description="NMP" evidence="1">
    <location>
        <begin position="31"/>
        <end position="60"/>
    </location>
</feature>
<feature type="region of interest" description="LID" evidence="1">
    <location>
        <begin position="127"/>
        <end position="165"/>
    </location>
</feature>
<feature type="binding site" evidence="1">
    <location>
        <begin position="11"/>
        <end position="16"/>
    </location>
    <ligand>
        <name>ATP</name>
        <dbReference type="ChEBI" id="CHEBI:30616"/>
    </ligand>
</feature>
<feature type="binding site" evidence="1">
    <location>
        <position position="32"/>
    </location>
    <ligand>
        <name>AMP</name>
        <dbReference type="ChEBI" id="CHEBI:456215"/>
    </ligand>
</feature>
<feature type="binding site" evidence="1">
    <location>
        <position position="37"/>
    </location>
    <ligand>
        <name>AMP</name>
        <dbReference type="ChEBI" id="CHEBI:456215"/>
    </ligand>
</feature>
<feature type="binding site" evidence="1">
    <location>
        <begin position="58"/>
        <end position="60"/>
    </location>
    <ligand>
        <name>AMP</name>
        <dbReference type="ChEBI" id="CHEBI:456215"/>
    </ligand>
</feature>
<feature type="binding site" evidence="1">
    <location>
        <begin position="86"/>
        <end position="89"/>
    </location>
    <ligand>
        <name>AMP</name>
        <dbReference type="ChEBI" id="CHEBI:456215"/>
    </ligand>
</feature>
<feature type="binding site" evidence="1">
    <location>
        <position position="93"/>
    </location>
    <ligand>
        <name>AMP</name>
        <dbReference type="ChEBI" id="CHEBI:456215"/>
    </ligand>
</feature>
<feature type="binding site" evidence="1">
    <location>
        <position position="128"/>
    </location>
    <ligand>
        <name>ATP</name>
        <dbReference type="ChEBI" id="CHEBI:30616"/>
    </ligand>
</feature>
<feature type="binding site" evidence="1">
    <location>
        <position position="131"/>
    </location>
    <ligand>
        <name>Zn(2+)</name>
        <dbReference type="ChEBI" id="CHEBI:29105"/>
        <note>structural</note>
    </ligand>
</feature>
<feature type="binding site" evidence="1">
    <location>
        <position position="134"/>
    </location>
    <ligand>
        <name>Zn(2+)</name>
        <dbReference type="ChEBI" id="CHEBI:29105"/>
        <note>structural</note>
    </ligand>
</feature>
<feature type="binding site" evidence="1">
    <location>
        <begin position="137"/>
        <end position="138"/>
    </location>
    <ligand>
        <name>ATP</name>
        <dbReference type="ChEBI" id="CHEBI:30616"/>
    </ligand>
</feature>
<feature type="binding site" evidence="1">
    <location>
        <position position="151"/>
    </location>
    <ligand>
        <name>Zn(2+)</name>
        <dbReference type="ChEBI" id="CHEBI:29105"/>
        <note>structural</note>
    </ligand>
</feature>
<feature type="binding site" evidence="1">
    <location>
        <position position="154"/>
    </location>
    <ligand>
        <name>Zn(2+)</name>
        <dbReference type="ChEBI" id="CHEBI:29105"/>
        <note>structural</note>
    </ligand>
</feature>
<feature type="binding site" evidence="1">
    <location>
        <position position="162"/>
    </location>
    <ligand>
        <name>AMP</name>
        <dbReference type="ChEBI" id="CHEBI:456215"/>
    </ligand>
</feature>
<feature type="binding site" evidence="1">
    <location>
        <position position="173"/>
    </location>
    <ligand>
        <name>AMP</name>
        <dbReference type="ChEBI" id="CHEBI:456215"/>
    </ligand>
</feature>
<feature type="binding site" evidence="1">
    <location>
        <position position="201"/>
    </location>
    <ligand>
        <name>ATP</name>
        <dbReference type="ChEBI" id="CHEBI:30616"/>
    </ligand>
</feature>
<accession>Q1GBJ7</accession>
<dbReference type="EC" id="2.7.4.3" evidence="1"/>
<dbReference type="EMBL" id="CR954253">
    <property type="protein sequence ID" value="CAI97252.1"/>
    <property type="molecule type" value="Genomic_DNA"/>
</dbReference>
<dbReference type="RefSeq" id="WP_003622476.1">
    <property type="nucleotide sequence ID" value="NZ_JQAV01000001.1"/>
</dbReference>
<dbReference type="SMR" id="Q1GBJ7"/>
<dbReference type="STRING" id="390333.Ldb0417"/>
<dbReference type="KEGG" id="ldb:Ldb0417"/>
<dbReference type="PATRIC" id="fig|390333.13.peg.374"/>
<dbReference type="eggNOG" id="COG0563">
    <property type="taxonomic scope" value="Bacteria"/>
</dbReference>
<dbReference type="HOGENOM" id="CLU_032354_1_2_9"/>
<dbReference type="BioCyc" id="LDEL390333:LDB_RS01775-MONOMER"/>
<dbReference type="UniPathway" id="UPA00588">
    <property type="reaction ID" value="UER00649"/>
</dbReference>
<dbReference type="Proteomes" id="UP000001259">
    <property type="component" value="Chromosome"/>
</dbReference>
<dbReference type="GO" id="GO:0005737">
    <property type="term" value="C:cytoplasm"/>
    <property type="evidence" value="ECO:0007669"/>
    <property type="project" value="UniProtKB-SubCell"/>
</dbReference>
<dbReference type="GO" id="GO:0004017">
    <property type="term" value="F:adenylate kinase activity"/>
    <property type="evidence" value="ECO:0007669"/>
    <property type="project" value="UniProtKB-UniRule"/>
</dbReference>
<dbReference type="GO" id="GO:0005524">
    <property type="term" value="F:ATP binding"/>
    <property type="evidence" value="ECO:0007669"/>
    <property type="project" value="UniProtKB-UniRule"/>
</dbReference>
<dbReference type="GO" id="GO:0008270">
    <property type="term" value="F:zinc ion binding"/>
    <property type="evidence" value="ECO:0007669"/>
    <property type="project" value="UniProtKB-UniRule"/>
</dbReference>
<dbReference type="GO" id="GO:0044209">
    <property type="term" value="P:AMP salvage"/>
    <property type="evidence" value="ECO:0007669"/>
    <property type="project" value="UniProtKB-UniRule"/>
</dbReference>
<dbReference type="CDD" id="cd01428">
    <property type="entry name" value="ADK"/>
    <property type="match status" value="1"/>
</dbReference>
<dbReference type="FunFam" id="3.40.50.300:FF:000106">
    <property type="entry name" value="Adenylate kinase mitochondrial"/>
    <property type="match status" value="1"/>
</dbReference>
<dbReference type="Gene3D" id="3.40.50.300">
    <property type="entry name" value="P-loop containing nucleotide triphosphate hydrolases"/>
    <property type="match status" value="1"/>
</dbReference>
<dbReference type="HAMAP" id="MF_00235">
    <property type="entry name" value="Adenylate_kinase_Adk"/>
    <property type="match status" value="1"/>
</dbReference>
<dbReference type="InterPro" id="IPR006259">
    <property type="entry name" value="Adenyl_kin_sub"/>
</dbReference>
<dbReference type="InterPro" id="IPR000850">
    <property type="entry name" value="Adenylat/UMP-CMP_kin"/>
</dbReference>
<dbReference type="InterPro" id="IPR033690">
    <property type="entry name" value="Adenylat_kinase_CS"/>
</dbReference>
<dbReference type="InterPro" id="IPR007862">
    <property type="entry name" value="Adenylate_kinase_lid-dom"/>
</dbReference>
<dbReference type="InterPro" id="IPR027417">
    <property type="entry name" value="P-loop_NTPase"/>
</dbReference>
<dbReference type="NCBIfam" id="TIGR01351">
    <property type="entry name" value="adk"/>
    <property type="match status" value="1"/>
</dbReference>
<dbReference type="NCBIfam" id="NF001380">
    <property type="entry name" value="PRK00279.1-2"/>
    <property type="match status" value="1"/>
</dbReference>
<dbReference type="NCBIfam" id="NF001381">
    <property type="entry name" value="PRK00279.1-3"/>
    <property type="match status" value="1"/>
</dbReference>
<dbReference type="PANTHER" id="PTHR23359">
    <property type="entry name" value="NUCLEOTIDE KINASE"/>
    <property type="match status" value="1"/>
</dbReference>
<dbReference type="Pfam" id="PF00406">
    <property type="entry name" value="ADK"/>
    <property type="match status" value="1"/>
</dbReference>
<dbReference type="Pfam" id="PF05191">
    <property type="entry name" value="ADK_lid"/>
    <property type="match status" value="1"/>
</dbReference>
<dbReference type="PRINTS" id="PR00094">
    <property type="entry name" value="ADENYLTKNASE"/>
</dbReference>
<dbReference type="SUPFAM" id="SSF52540">
    <property type="entry name" value="P-loop containing nucleoside triphosphate hydrolases"/>
    <property type="match status" value="1"/>
</dbReference>
<dbReference type="PROSITE" id="PS00113">
    <property type="entry name" value="ADENYLATE_KINASE"/>
    <property type="match status" value="1"/>
</dbReference>
<sequence length="217" mass="24210">MINLILLGLPGAGKGTASEQIVDKYHLAHISTGDMFREAMANKTPVGLEAKSYIDKGDLVPDEVTAKLVEERLGQDDVKNGFILDGFPRTTNQAELLDEITTRLNKQLTNVIAIDVKEETLIDRLSARFMCKNCGATYNKFSKKPKVEGTCDRCGGHEFYQREDDKPEVVKNRLEVNEKMNAPLKEYYDKKGLLATVNGEQVPEKVFADIDAILSKD</sequence>
<proteinExistence type="inferred from homology"/>
<reference key="1">
    <citation type="journal article" date="2006" name="Proc. Natl. Acad. Sci. U.S.A.">
        <title>The complete genome sequence of Lactobacillus bulgaricus reveals extensive and ongoing reductive evolution.</title>
        <authorList>
            <person name="van de Guchte M."/>
            <person name="Penaud S."/>
            <person name="Grimaldi C."/>
            <person name="Barbe V."/>
            <person name="Bryson K."/>
            <person name="Nicolas P."/>
            <person name="Robert C."/>
            <person name="Oztas S."/>
            <person name="Mangenot S."/>
            <person name="Couloux A."/>
            <person name="Loux V."/>
            <person name="Dervyn R."/>
            <person name="Bossy R."/>
            <person name="Bolotin A."/>
            <person name="Batto J.-M."/>
            <person name="Walunas T."/>
            <person name="Gibrat J.-F."/>
            <person name="Bessieres P."/>
            <person name="Weissenbach J."/>
            <person name="Ehrlich S.D."/>
            <person name="Maguin E."/>
        </authorList>
    </citation>
    <scope>NUCLEOTIDE SEQUENCE [LARGE SCALE GENOMIC DNA]</scope>
    <source>
        <strain>ATCC 11842 / DSM 20081 / BCRC 10696 / JCM 1002 / NBRC 13953 / NCIMB 11778 / NCTC 12712 / WDCM 00102 / Lb 14</strain>
    </source>
</reference>
<gene>
    <name evidence="1" type="primary">adk</name>
    <name type="ordered locus">Ldb0417</name>
</gene>
<protein>
    <recommendedName>
        <fullName evidence="1">Adenylate kinase</fullName>
        <shortName evidence="1">AK</shortName>
        <ecNumber evidence="1">2.7.4.3</ecNumber>
    </recommendedName>
    <alternativeName>
        <fullName evidence="1">ATP-AMP transphosphorylase</fullName>
    </alternativeName>
    <alternativeName>
        <fullName evidence="1">ATP:AMP phosphotransferase</fullName>
    </alternativeName>
    <alternativeName>
        <fullName evidence="1">Adenylate monophosphate kinase</fullName>
    </alternativeName>
</protein>
<evidence type="ECO:0000255" key="1">
    <source>
        <dbReference type="HAMAP-Rule" id="MF_00235"/>
    </source>
</evidence>
<organism>
    <name type="scientific">Lactobacillus delbrueckii subsp. bulgaricus (strain ATCC 11842 / DSM 20081 / BCRC 10696 / JCM 1002 / NBRC 13953 / NCIMB 11778 / NCTC 12712 / WDCM 00102 / Lb 14)</name>
    <dbReference type="NCBI Taxonomy" id="390333"/>
    <lineage>
        <taxon>Bacteria</taxon>
        <taxon>Bacillati</taxon>
        <taxon>Bacillota</taxon>
        <taxon>Bacilli</taxon>
        <taxon>Lactobacillales</taxon>
        <taxon>Lactobacillaceae</taxon>
        <taxon>Lactobacillus</taxon>
    </lineage>
</organism>
<comment type="function">
    <text evidence="1">Catalyzes the reversible transfer of the terminal phosphate group between ATP and AMP. Plays an important role in cellular energy homeostasis and in adenine nucleotide metabolism.</text>
</comment>
<comment type="catalytic activity">
    <reaction evidence="1">
        <text>AMP + ATP = 2 ADP</text>
        <dbReference type="Rhea" id="RHEA:12973"/>
        <dbReference type="ChEBI" id="CHEBI:30616"/>
        <dbReference type="ChEBI" id="CHEBI:456215"/>
        <dbReference type="ChEBI" id="CHEBI:456216"/>
        <dbReference type="EC" id="2.7.4.3"/>
    </reaction>
</comment>
<comment type="pathway">
    <text evidence="1">Purine metabolism; AMP biosynthesis via salvage pathway; AMP from ADP: step 1/1.</text>
</comment>
<comment type="subunit">
    <text evidence="1">Monomer.</text>
</comment>
<comment type="subcellular location">
    <subcellularLocation>
        <location evidence="1">Cytoplasm</location>
    </subcellularLocation>
</comment>
<comment type="domain">
    <text evidence="1">Consists of three domains, a large central CORE domain and two small peripheral domains, NMPbind and LID, which undergo movements during catalysis. The LID domain closes over the site of phosphoryl transfer upon ATP binding. Assembling and dissambling the active center during each catalytic cycle provides an effective means to prevent ATP hydrolysis. Some bacteria have evolved a zinc-coordinating structure that stabilizes the LID domain.</text>
</comment>
<comment type="similarity">
    <text evidence="1">Belongs to the adenylate kinase family.</text>
</comment>